<keyword id="KW-1185">Reference proteome</keyword>
<feature type="chain" id="PRO_0000283447" description="Putative F-box protein At3g22710">
    <location>
        <begin position="1"/>
        <end position="326"/>
    </location>
</feature>
<feature type="domain" description="F-box" evidence="1">
    <location>
        <begin position="1"/>
        <end position="50"/>
    </location>
</feature>
<name>FB177_ARATH</name>
<protein>
    <recommendedName>
        <fullName>Putative F-box protein At3g22710</fullName>
    </recommendedName>
</protein>
<organism>
    <name type="scientific">Arabidopsis thaliana</name>
    <name type="common">Mouse-ear cress</name>
    <dbReference type="NCBI Taxonomy" id="3702"/>
    <lineage>
        <taxon>Eukaryota</taxon>
        <taxon>Viridiplantae</taxon>
        <taxon>Streptophyta</taxon>
        <taxon>Embryophyta</taxon>
        <taxon>Tracheophyta</taxon>
        <taxon>Spermatophyta</taxon>
        <taxon>Magnoliopsida</taxon>
        <taxon>eudicotyledons</taxon>
        <taxon>Gunneridae</taxon>
        <taxon>Pentapetalae</taxon>
        <taxon>rosids</taxon>
        <taxon>malvids</taxon>
        <taxon>Brassicales</taxon>
        <taxon>Brassicaceae</taxon>
        <taxon>Camelineae</taxon>
        <taxon>Arabidopsis</taxon>
    </lineage>
</organism>
<comment type="sequence caution" evidence="2">
    <conflict type="erroneous gene model prediction">
        <sequence resource="EMBL-CDS" id="BAB01246"/>
    </conflict>
</comment>
<evidence type="ECO:0000255" key="1">
    <source>
        <dbReference type="PROSITE-ProRule" id="PRU00080"/>
    </source>
</evidence>
<evidence type="ECO:0000305" key="2"/>
<reference key="1">
    <citation type="journal article" date="2000" name="DNA Res.">
        <title>Structural analysis of Arabidopsis thaliana chromosome 3. I. Sequence features of the regions of 4,504,864 bp covered by sixty P1 and TAC clones.</title>
        <authorList>
            <person name="Sato S."/>
            <person name="Nakamura Y."/>
            <person name="Kaneko T."/>
            <person name="Katoh T."/>
            <person name="Asamizu E."/>
            <person name="Tabata S."/>
        </authorList>
    </citation>
    <scope>NUCLEOTIDE SEQUENCE [LARGE SCALE GENOMIC DNA]</scope>
    <source>
        <strain>cv. Columbia</strain>
    </source>
</reference>
<reference key="2">
    <citation type="journal article" date="2017" name="Plant J.">
        <title>Araport11: a complete reannotation of the Arabidopsis thaliana reference genome.</title>
        <authorList>
            <person name="Cheng C.Y."/>
            <person name="Krishnakumar V."/>
            <person name="Chan A.P."/>
            <person name="Thibaud-Nissen F."/>
            <person name="Schobel S."/>
            <person name="Town C.D."/>
        </authorList>
    </citation>
    <scope>GENOME REANNOTATION</scope>
    <source>
        <strain>cv. Columbia</strain>
    </source>
</reference>
<proteinExistence type="predicted"/>
<dbReference type="EMBL" id="AB022223">
    <property type="protein sequence ID" value="BAB01246.1"/>
    <property type="status" value="ALT_SEQ"/>
    <property type="molecule type" value="Genomic_DNA"/>
</dbReference>
<dbReference type="EMBL" id="CP002686">
    <property type="protein sequence ID" value="AEE76668.1"/>
    <property type="molecule type" value="Genomic_DNA"/>
</dbReference>
<dbReference type="RefSeq" id="NP_188910.1">
    <property type="nucleotide sequence ID" value="NM_113170.1"/>
</dbReference>
<dbReference type="SMR" id="Q9LUJ0"/>
<dbReference type="FunCoup" id="Q9LUJ0">
    <property type="interactions" value="1"/>
</dbReference>
<dbReference type="STRING" id="3702.Q9LUJ0"/>
<dbReference type="PaxDb" id="3702-AT3G22710.1"/>
<dbReference type="EnsemblPlants" id="AT3G22710.1">
    <property type="protein sequence ID" value="AT3G22710.1"/>
    <property type="gene ID" value="AT3G22710"/>
</dbReference>
<dbReference type="GeneID" id="821842"/>
<dbReference type="Gramene" id="AT3G22710.1">
    <property type="protein sequence ID" value="AT3G22710.1"/>
    <property type="gene ID" value="AT3G22710"/>
</dbReference>
<dbReference type="KEGG" id="ath:AT3G22710"/>
<dbReference type="Araport" id="AT3G22710"/>
<dbReference type="TAIR" id="AT3G22710"/>
<dbReference type="HOGENOM" id="CLU_034692_1_0_1"/>
<dbReference type="InParanoid" id="Q9LUJ0"/>
<dbReference type="PRO" id="PR:Q9LUJ0"/>
<dbReference type="Proteomes" id="UP000006548">
    <property type="component" value="Chromosome 3"/>
</dbReference>
<dbReference type="ExpressionAtlas" id="Q9LUJ0">
    <property type="expression patterns" value="differential"/>
</dbReference>
<dbReference type="CDD" id="cd22157">
    <property type="entry name" value="F-box_AtFBW1-like"/>
    <property type="match status" value="1"/>
</dbReference>
<dbReference type="Gene3D" id="1.20.1280.50">
    <property type="match status" value="1"/>
</dbReference>
<dbReference type="InterPro" id="IPR050233">
    <property type="entry name" value="A_thaliana_F-box"/>
</dbReference>
<dbReference type="InterPro" id="IPR006527">
    <property type="entry name" value="F-box-assoc_dom_typ1"/>
</dbReference>
<dbReference type="InterPro" id="IPR017451">
    <property type="entry name" value="F-box-assoc_interact_dom"/>
</dbReference>
<dbReference type="InterPro" id="IPR036047">
    <property type="entry name" value="F-box-like_dom_sf"/>
</dbReference>
<dbReference type="InterPro" id="IPR001810">
    <property type="entry name" value="F-box_dom"/>
</dbReference>
<dbReference type="NCBIfam" id="TIGR01640">
    <property type="entry name" value="F_box_assoc_1"/>
    <property type="match status" value="1"/>
</dbReference>
<dbReference type="PANTHER" id="PTHR47993:SF70">
    <property type="entry name" value="F-BOX ONLY PROTEIN 9-RELATED"/>
    <property type="match status" value="1"/>
</dbReference>
<dbReference type="PANTHER" id="PTHR47993">
    <property type="entry name" value="OS09G0372900 PROTEIN-RELATED"/>
    <property type="match status" value="1"/>
</dbReference>
<dbReference type="Pfam" id="PF00646">
    <property type="entry name" value="F-box"/>
    <property type="match status" value="1"/>
</dbReference>
<dbReference type="Pfam" id="PF07734">
    <property type="entry name" value="FBA_1"/>
    <property type="match status" value="1"/>
</dbReference>
<dbReference type="SMART" id="SM00256">
    <property type="entry name" value="FBOX"/>
    <property type="match status" value="1"/>
</dbReference>
<dbReference type="SUPFAM" id="SSF81383">
    <property type="entry name" value="F-box domain"/>
    <property type="match status" value="1"/>
</dbReference>
<dbReference type="PROSITE" id="PS50181">
    <property type="entry name" value="FBOX"/>
    <property type="match status" value="1"/>
</dbReference>
<gene>
    <name type="ordered locus">At3g22710</name>
    <name type="ORF">MWI23.8</name>
</gene>
<accession>Q9LUJ0</accession>
<accession>F4J1L8</accession>
<sequence>MTMPDLPPDLVEEILSRVPATSVKKLRSTCTQWNAIFKDERFTEKHFSKAPKESMVLMLKEHRVCPDKRLVVWNPCLGETKWIQLKVDYRRYVSKFCLGYIQNNESRRSYKILRSWYSYDDKSSPRQRDLGFEIYEFISDSSWRVLNDGNTYLLAYDVEENSRVVLMFDFTTERFKRLRLPHFQDVGNMDLSVVREEQLSILHWTRNTSKMEIWITNNIDTDATLLWRLHLHTQVFSRNCVRVFSSLYIDKEKKVVLCCNVNDDATSKNIVYIIGEDNGYYTEILFLLPINIHWVLLDRNKKWYSSIFNYVPRLVQIYNGHLLFFS</sequence>